<reference key="1">
    <citation type="journal article" date="2007" name="Theor. Appl. Genet.">
        <title>Complete chloroplast genome sequences of Hordeum vulgare, Sorghum bicolor and Agrostis stolonifera, and comparative analyses with other grass genomes.</title>
        <authorList>
            <person name="Saski C."/>
            <person name="Lee S.-B."/>
            <person name="Fjellheim S."/>
            <person name="Guda C."/>
            <person name="Jansen R.K."/>
            <person name="Luo H."/>
            <person name="Tomkins J."/>
            <person name="Rognli O.A."/>
            <person name="Daniell H."/>
            <person name="Clarke J.L."/>
        </authorList>
    </citation>
    <scope>NUCLEOTIDE SEQUENCE [LARGE SCALE GENOMIC DNA]</scope>
    <source>
        <strain>cv. Penn A-4</strain>
    </source>
</reference>
<evidence type="ECO:0000255" key="1">
    <source>
        <dbReference type="HAMAP-Rule" id="MF_01396"/>
    </source>
</evidence>
<organism>
    <name type="scientific">Agrostis stolonifera</name>
    <name type="common">Creeping bentgrass</name>
    <dbReference type="NCBI Taxonomy" id="63632"/>
    <lineage>
        <taxon>Eukaryota</taxon>
        <taxon>Viridiplantae</taxon>
        <taxon>Streptophyta</taxon>
        <taxon>Embryophyta</taxon>
        <taxon>Tracheophyta</taxon>
        <taxon>Spermatophyta</taxon>
        <taxon>Magnoliopsida</taxon>
        <taxon>Liliopsida</taxon>
        <taxon>Poales</taxon>
        <taxon>Poaceae</taxon>
        <taxon>BOP clade</taxon>
        <taxon>Pooideae</taxon>
        <taxon>Poodae</taxon>
        <taxon>Poeae</taxon>
        <taxon>Poeae Chloroplast Group 1 (Aveneae type)</taxon>
        <taxon>Agrostidodinae</taxon>
        <taxon>Agrostidinae</taxon>
        <taxon>Agrostis</taxon>
    </lineage>
</organism>
<comment type="function">
    <text evidence="1">F(1)F(0) ATP synthase produces ATP from ADP in the presence of a proton or sodium gradient. F-type ATPases consist of two structural domains, F(1) containing the extramembraneous catalytic core and F(0) containing the membrane proton channel, linked together by a central stalk and a peripheral stalk. During catalysis, ATP synthesis in the catalytic domain of F(1) is coupled via a rotary mechanism of the central stalk subunits to proton translocation.</text>
</comment>
<comment type="function">
    <text evidence="1">Key component of the F(0) channel; it plays a direct role in translocation across the membrane. A homomeric c-ring of between 10-14 subunits forms the central stalk rotor element with the F(1) delta and epsilon subunits.</text>
</comment>
<comment type="subunit">
    <text evidence="1">F-type ATPases have 2 components, F(1) - the catalytic core - and F(0) - the membrane proton channel. F(1) has five subunits: alpha(3), beta(3), gamma(1), delta(1), epsilon(1). F(0) has four main subunits: a(1), b(1), b'(1) and c(10-14). The alpha and beta chains form an alternating ring which encloses part of the gamma chain. F(1) is attached to F(0) by a central stalk formed by the gamma and epsilon chains, while a peripheral stalk is formed by the delta, b and b' chains.</text>
</comment>
<comment type="subcellular location">
    <subcellularLocation>
        <location evidence="1">Plastid</location>
        <location evidence="1">Chloroplast thylakoid membrane</location>
        <topology evidence="1">Multi-pass membrane protein</topology>
    </subcellularLocation>
</comment>
<comment type="miscellaneous">
    <text>In plastids the F-type ATPase is also known as CF(1)CF(0).</text>
</comment>
<comment type="similarity">
    <text evidence="1">Belongs to the ATPase C chain family.</text>
</comment>
<feature type="chain" id="PRO_0000362883" description="ATP synthase subunit c, chloroplastic">
    <location>
        <begin position="1"/>
        <end position="81"/>
    </location>
</feature>
<feature type="transmembrane region" description="Helical" evidence="1">
    <location>
        <begin position="3"/>
        <end position="23"/>
    </location>
</feature>
<feature type="transmembrane region" description="Helical" evidence="1">
    <location>
        <begin position="57"/>
        <end position="77"/>
    </location>
</feature>
<feature type="site" description="Reversibly protonated during proton transport" evidence="1">
    <location>
        <position position="61"/>
    </location>
</feature>
<proteinExistence type="inferred from homology"/>
<protein>
    <recommendedName>
        <fullName evidence="1">ATP synthase subunit c, chloroplastic</fullName>
    </recommendedName>
    <alternativeName>
        <fullName evidence="1">ATP synthase F(0) sector subunit c</fullName>
    </alternativeName>
    <alternativeName>
        <fullName evidence="1">ATPase subunit III</fullName>
    </alternativeName>
    <alternativeName>
        <fullName evidence="1">F-type ATPase subunit c</fullName>
        <shortName evidence="1">F-ATPase subunit c</shortName>
    </alternativeName>
    <alternativeName>
        <fullName evidence="1">Lipid-binding protein</fullName>
    </alternativeName>
</protein>
<gene>
    <name evidence="1" type="primary">atpH</name>
</gene>
<dbReference type="EMBL" id="EF115543">
    <property type="protein sequence ID" value="ABK79575.1"/>
    <property type="molecule type" value="Genomic_DNA"/>
</dbReference>
<dbReference type="RefSeq" id="YP_874731.1">
    <property type="nucleotide sequence ID" value="NC_008591.1"/>
</dbReference>
<dbReference type="SMR" id="A1EA03"/>
<dbReference type="GeneID" id="4524925"/>
<dbReference type="GO" id="GO:0009535">
    <property type="term" value="C:chloroplast thylakoid membrane"/>
    <property type="evidence" value="ECO:0007669"/>
    <property type="project" value="UniProtKB-SubCell"/>
</dbReference>
<dbReference type="GO" id="GO:0045259">
    <property type="term" value="C:proton-transporting ATP synthase complex"/>
    <property type="evidence" value="ECO:0007669"/>
    <property type="project" value="UniProtKB-KW"/>
</dbReference>
<dbReference type="GO" id="GO:0033177">
    <property type="term" value="C:proton-transporting two-sector ATPase complex, proton-transporting domain"/>
    <property type="evidence" value="ECO:0007669"/>
    <property type="project" value="InterPro"/>
</dbReference>
<dbReference type="GO" id="GO:0008289">
    <property type="term" value="F:lipid binding"/>
    <property type="evidence" value="ECO:0007669"/>
    <property type="project" value="UniProtKB-KW"/>
</dbReference>
<dbReference type="GO" id="GO:0046933">
    <property type="term" value="F:proton-transporting ATP synthase activity, rotational mechanism"/>
    <property type="evidence" value="ECO:0007669"/>
    <property type="project" value="UniProtKB-UniRule"/>
</dbReference>
<dbReference type="CDD" id="cd18183">
    <property type="entry name" value="ATP-synt_Fo_c_ATPH"/>
    <property type="match status" value="1"/>
</dbReference>
<dbReference type="FunFam" id="1.20.20.10:FF:000001">
    <property type="entry name" value="ATP synthase subunit c, chloroplastic"/>
    <property type="match status" value="1"/>
</dbReference>
<dbReference type="Gene3D" id="1.20.20.10">
    <property type="entry name" value="F1F0 ATP synthase subunit C"/>
    <property type="match status" value="1"/>
</dbReference>
<dbReference type="HAMAP" id="MF_01396">
    <property type="entry name" value="ATP_synth_c_bact"/>
    <property type="match status" value="1"/>
</dbReference>
<dbReference type="InterPro" id="IPR005953">
    <property type="entry name" value="ATP_synth_csu_bac/chlpt"/>
</dbReference>
<dbReference type="InterPro" id="IPR000454">
    <property type="entry name" value="ATP_synth_F0_csu"/>
</dbReference>
<dbReference type="InterPro" id="IPR020537">
    <property type="entry name" value="ATP_synth_F0_csu_DDCD_BS"/>
</dbReference>
<dbReference type="InterPro" id="IPR038662">
    <property type="entry name" value="ATP_synth_F0_csu_sf"/>
</dbReference>
<dbReference type="InterPro" id="IPR002379">
    <property type="entry name" value="ATPase_proteolipid_c-like_dom"/>
</dbReference>
<dbReference type="InterPro" id="IPR035921">
    <property type="entry name" value="F/V-ATP_Csub_sf"/>
</dbReference>
<dbReference type="NCBIfam" id="TIGR01260">
    <property type="entry name" value="ATP_synt_c"/>
    <property type="match status" value="1"/>
</dbReference>
<dbReference type="NCBIfam" id="NF005608">
    <property type="entry name" value="PRK07354.1"/>
    <property type="match status" value="1"/>
</dbReference>
<dbReference type="PANTHER" id="PTHR10031">
    <property type="entry name" value="ATP SYNTHASE LIPID-BINDING PROTEIN, MITOCHONDRIAL"/>
    <property type="match status" value="1"/>
</dbReference>
<dbReference type="PANTHER" id="PTHR10031:SF0">
    <property type="entry name" value="ATPASE PROTEIN 9"/>
    <property type="match status" value="1"/>
</dbReference>
<dbReference type="Pfam" id="PF00137">
    <property type="entry name" value="ATP-synt_C"/>
    <property type="match status" value="1"/>
</dbReference>
<dbReference type="PRINTS" id="PR00124">
    <property type="entry name" value="ATPASEC"/>
</dbReference>
<dbReference type="SUPFAM" id="SSF81333">
    <property type="entry name" value="F1F0 ATP synthase subunit C"/>
    <property type="match status" value="1"/>
</dbReference>
<dbReference type="PROSITE" id="PS00605">
    <property type="entry name" value="ATPASE_C"/>
    <property type="match status" value="1"/>
</dbReference>
<keyword id="KW-0066">ATP synthesis</keyword>
<keyword id="KW-0138">CF(0)</keyword>
<keyword id="KW-0150">Chloroplast</keyword>
<keyword id="KW-0375">Hydrogen ion transport</keyword>
<keyword id="KW-0406">Ion transport</keyword>
<keyword id="KW-0446">Lipid-binding</keyword>
<keyword id="KW-0472">Membrane</keyword>
<keyword id="KW-0934">Plastid</keyword>
<keyword id="KW-0793">Thylakoid</keyword>
<keyword id="KW-0812">Transmembrane</keyword>
<keyword id="KW-1133">Transmembrane helix</keyword>
<keyword id="KW-0813">Transport</keyword>
<accession>A1EA03</accession>
<geneLocation type="chloroplast"/>
<name>ATPH_AGRST</name>
<sequence>MNPLIAAASVIAAGLAVGLASIGPGVGQGTAAGQAVEGIARQPEAEGKIRGTLLLSLAFMEALTIYGLVVALALLFANPFV</sequence>